<feature type="chain" id="PRO_1000098863" description="Protease HtpX">
    <location>
        <begin position="1"/>
        <end position="293"/>
    </location>
</feature>
<feature type="transmembrane region" description="Helical" evidence="1">
    <location>
        <begin position="4"/>
        <end position="24"/>
    </location>
</feature>
<feature type="transmembrane region" description="Helical" evidence="1">
    <location>
        <begin position="34"/>
        <end position="54"/>
    </location>
</feature>
<feature type="transmembrane region" description="Helical" evidence="1">
    <location>
        <begin position="158"/>
        <end position="178"/>
    </location>
</feature>
<feature type="transmembrane region" description="Helical" evidence="1">
    <location>
        <begin position="193"/>
        <end position="213"/>
    </location>
</feature>
<feature type="active site" evidence="1">
    <location>
        <position position="140"/>
    </location>
</feature>
<feature type="binding site" evidence="1">
    <location>
        <position position="139"/>
    </location>
    <ligand>
        <name>Zn(2+)</name>
        <dbReference type="ChEBI" id="CHEBI:29105"/>
        <note>catalytic</note>
    </ligand>
</feature>
<feature type="binding site" evidence="1">
    <location>
        <position position="143"/>
    </location>
    <ligand>
        <name>Zn(2+)</name>
        <dbReference type="ChEBI" id="CHEBI:29105"/>
        <note>catalytic</note>
    </ligand>
</feature>
<feature type="binding site" evidence="1">
    <location>
        <position position="222"/>
    </location>
    <ligand>
        <name>Zn(2+)</name>
        <dbReference type="ChEBI" id="CHEBI:29105"/>
        <note>catalytic</note>
    </ligand>
</feature>
<keyword id="KW-0997">Cell inner membrane</keyword>
<keyword id="KW-1003">Cell membrane</keyword>
<keyword id="KW-0378">Hydrolase</keyword>
<keyword id="KW-0472">Membrane</keyword>
<keyword id="KW-0479">Metal-binding</keyword>
<keyword id="KW-0482">Metalloprotease</keyword>
<keyword id="KW-0645">Protease</keyword>
<keyword id="KW-0812">Transmembrane</keyword>
<keyword id="KW-1133">Transmembrane helix</keyword>
<keyword id="KW-0862">Zinc</keyword>
<organism>
    <name type="scientific">Yersinia pseudotuberculosis serotype IB (strain PB1/+)</name>
    <dbReference type="NCBI Taxonomy" id="502801"/>
    <lineage>
        <taxon>Bacteria</taxon>
        <taxon>Pseudomonadati</taxon>
        <taxon>Pseudomonadota</taxon>
        <taxon>Gammaproteobacteria</taxon>
        <taxon>Enterobacterales</taxon>
        <taxon>Yersiniaceae</taxon>
        <taxon>Yersinia</taxon>
    </lineage>
</organism>
<sequence>MMRIALFLLTNLAVMLVFGLVLSLTGIQSSSVQGLMIMAGLFGFGGAFVSLLMSKWMALRSVGGEVIERPRNETEYWLLETVRRQSQQVGIAMPQVAIYQAPDINAFATGARRDASLVAVSTGLLQNMSRDEAEAVIAHEISHVANGDMVTMTLIQGVVNTFVIFISRLIAQIAAGFLSGDRDGESNSPGNPMVYFAVSMVLELVFGILASIITMWFSRHREFHADAGSAKLVGREKMIAALQRLKTSYEPQEAGSMMAFCINGKSKTFSELFMSHPPLDKRIEALRSGQYLK</sequence>
<accession>B2K6A2</accession>
<gene>
    <name evidence="1" type="primary">htpX</name>
    <name type="ordered locus">YPTS_2450</name>
</gene>
<name>HTPX_YERPB</name>
<protein>
    <recommendedName>
        <fullName evidence="1">Protease HtpX</fullName>
        <ecNumber evidence="1">3.4.24.-</ecNumber>
    </recommendedName>
    <alternativeName>
        <fullName evidence="1">Heat shock protein HtpX</fullName>
    </alternativeName>
</protein>
<comment type="cofactor">
    <cofactor evidence="1">
        <name>Zn(2+)</name>
        <dbReference type="ChEBI" id="CHEBI:29105"/>
    </cofactor>
    <text evidence="1">Binds 1 zinc ion per subunit.</text>
</comment>
<comment type="subcellular location">
    <subcellularLocation>
        <location evidence="1">Cell inner membrane</location>
        <topology evidence="1">Multi-pass membrane protein</topology>
    </subcellularLocation>
</comment>
<comment type="similarity">
    <text evidence="1">Belongs to the peptidase M48B family.</text>
</comment>
<evidence type="ECO:0000255" key="1">
    <source>
        <dbReference type="HAMAP-Rule" id="MF_00188"/>
    </source>
</evidence>
<proteinExistence type="inferred from homology"/>
<reference key="1">
    <citation type="submission" date="2008-04" db="EMBL/GenBank/DDBJ databases">
        <title>Complete sequence of Yersinia pseudotuberculosis PB1/+.</title>
        <authorList>
            <person name="Copeland A."/>
            <person name="Lucas S."/>
            <person name="Lapidus A."/>
            <person name="Glavina del Rio T."/>
            <person name="Dalin E."/>
            <person name="Tice H."/>
            <person name="Bruce D."/>
            <person name="Goodwin L."/>
            <person name="Pitluck S."/>
            <person name="Munk A.C."/>
            <person name="Brettin T."/>
            <person name="Detter J.C."/>
            <person name="Han C."/>
            <person name="Tapia R."/>
            <person name="Schmutz J."/>
            <person name="Larimer F."/>
            <person name="Land M."/>
            <person name="Hauser L."/>
            <person name="Challacombe J.F."/>
            <person name="Green L."/>
            <person name="Lindler L.E."/>
            <person name="Nikolich M.P."/>
            <person name="Richardson P."/>
        </authorList>
    </citation>
    <scope>NUCLEOTIDE SEQUENCE [LARGE SCALE GENOMIC DNA]</scope>
    <source>
        <strain>PB1/+</strain>
    </source>
</reference>
<dbReference type="EC" id="3.4.24.-" evidence="1"/>
<dbReference type="EMBL" id="CP001048">
    <property type="protein sequence ID" value="ACC89411.1"/>
    <property type="molecule type" value="Genomic_DNA"/>
</dbReference>
<dbReference type="RefSeq" id="WP_002210847.1">
    <property type="nucleotide sequence ID" value="NZ_CP009780.1"/>
</dbReference>
<dbReference type="SMR" id="B2K6A2"/>
<dbReference type="MEROPS" id="M48.002"/>
<dbReference type="GeneID" id="57976872"/>
<dbReference type="KEGG" id="ypb:YPTS_2450"/>
<dbReference type="PATRIC" id="fig|502801.10.peg.1860"/>
<dbReference type="GO" id="GO:0005886">
    <property type="term" value="C:plasma membrane"/>
    <property type="evidence" value="ECO:0007669"/>
    <property type="project" value="UniProtKB-SubCell"/>
</dbReference>
<dbReference type="GO" id="GO:0004222">
    <property type="term" value="F:metalloendopeptidase activity"/>
    <property type="evidence" value="ECO:0007669"/>
    <property type="project" value="UniProtKB-UniRule"/>
</dbReference>
<dbReference type="GO" id="GO:0008270">
    <property type="term" value="F:zinc ion binding"/>
    <property type="evidence" value="ECO:0007669"/>
    <property type="project" value="UniProtKB-UniRule"/>
</dbReference>
<dbReference type="GO" id="GO:0006508">
    <property type="term" value="P:proteolysis"/>
    <property type="evidence" value="ECO:0007669"/>
    <property type="project" value="UniProtKB-KW"/>
</dbReference>
<dbReference type="CDD" id="cd07335">
    <property type="entry name" value="M48B_HtpX_like"/>
    <property type="match status" value="1"/>
</dbReference>
<dbReference type="FunFam" id="3.30.2010.10:FF:000001">
    <property type="entry name" value="Protease HtpX"/>
    <property type="match status" value="1"/>
</dbReference>
<dbReference type="Gene3D" id="3.30.2010.10">
    <property type="entry name" value="Metalloproteases ('zincins'), catalytic domain"/>
    <property type="match status" value="1"/>
</dbReference>
<dbReference type="HAMAP" id="MF_00188">
    <property type="entry name" value="Pept_M48_protease_HtpX"/>
    <property type="match status" value="1"/>
</dbReference>
<dbReference type="InterPro" id="IPR050083">
    <property type="entry name" value="HtpX_protease"/>
</dbReference>
<dbReference type="InterPro" id="IPR022919">
    <property type="entry name" value="Pept_M48_protease_HtpX"/>
</dbReference>
<dbReference type="InterPro" id="IPR001915">
    <property type="entry name" value="Peptidase_M48"/>
</dbReference>
<dbReference type="NCBIfam" id="NF003965">
    <property type="entry name" value="PRK05457.1"/>
    <property type="match status" value="1"/>
</dbReference>
<dbReference type="PANTHER" id="PTHR43221">
    <property type="entry name" value="PROTEASE HTPX"/>
    <property type="match status" value="1"/>
</dbReference>
<dbReference type="PANTHER" id="PTHR43221:SF1">
    <property type="entry name" value="PROTEASE HTPX"/>
    <property type="match status" value="1"/>
</dbReference>
<dbReference type="Pfam" id="PF01435">
    <property type="entry name" value="Peptidase_M48"/>
    <property type="match status" value="1"/>
</dbReference>